<evidence type="ECO:0000250" key="1">
    <source>
        <dbReference type="UniProtKB" id="Q9BPX6"/>
    </source>
</evidence>
<evidence type="ECO:0000255" key="2"/>
<evidence type="ECO:0000255" key="3">
    <source>
        <dbReference type="PROSITE-ProRule" id="PRU00448"/>
    </source>
</evidence>
<evidence type="ECO:0000256" key="4">
    <source>
        <dbReference type="SAM" id="MobiDB-lite"/>
    </source>
</evidence>
<evidence type="ECO:0000305" key="5"/>
<reference key="1">
    <citation type="journal article" date="2013" name="Nature">
        <title>The zebrafish reference genome sequence and its relationship to the human genome.</title>
        <authorList>
            <person name="Howe K."/>
            <person name="Clark M.D."/>
            <person name="Torroja C.F."/>
            <person name="Torrance J."/>
            <person name="Berthelot C."/>
            <person name="Muffato M."/>
            <person name="Collins J.E."/>
            <person name="Humphray S."/>
            <person name="McLaren K."/>
            <person name="Matthews L."/>
            <person name="McLaren S."/>
            <person name="Sealy I."/>
            <person name="Caccamo M."/>
            <person name="Churcher C."/>
            <person name="Scott C."/>
            <person name="Barrett J.C."/>
            <person name="Koch R."/>
            <person name="Rauch G.J."/>
            <person name="White S."/>
            <person name="Chow W."/>
            <person name="Kilian B."/>
            <person name="Quintais L.T."/>
            <person name="Guerra-Assuncao J.A."/>
            <person name="Zhou Y."/>
            <person name="Gu Y."/>
            <person name="Yen J."/>
            <person name="Vogel J.H."/>
            <person name="Eyre T."/>
            <person name="Redmond S."/>
            <person name="Banerjee R."/>
            <person name="Chi J."/>
            <person name="Fu B."/>
            <person name="Langley E."/>
            <person name="Maguire S.F."/>
            <person name="Laird G.K."/>
            <person name="Lloyd D."/>
            <person name="Kenyon E."/>
            <person name="Donaldson S."/>
            <person name="Sehra H."/>
            <person name="Almeida-King J."/>
            <person name="Loveland J."/>
            <person name="Trevanion S."/>
            <person name="Jones M."/>
            <person name="Quail M."/>
            <person name="Willey D."/>
            <person name="Hunt A."/>
            <person name="Burton J."/>
            <person name="Sims S."/>
            <person name="McLay K."/>
            <person name="Plumb B."/>
            <person name="Davis J."/>
            <person name="Clee C."/>
            <person name="Oliver K."/>
            <person name="Clark R."/>
            <person name="Riddle C."/>
            <person name="Elliot D."/>
            <person name="Threadgold G."/>
            <person name="Harden G."/>
            <person name="Ware D."/>
            <person name="Begum S."/>
            <person name="Mortimore B."/>
            <person name="Kerry G."/>
            <person name="Heath P."/>
            <person name="Phillimore B."/>
            <person name="Tracey A."/>
            <person name="Corby N."/>
            <person name="Dunn M."/>
            <person name="Johnson C."/>
            <person name="Wood J."/>
            <person name="Clark S."/>
            <person name="Pelan S."/>
            <person name="Griffiths G."/>
            <person name="Smith M."/>
            <person name="Glithero R."/>
            <person name="Howden P."/>
            <person name="Barker N."/>
            <person name="Lloyd C."/>
            <person name="Stevens C."/>
            <person name="Harley J."/>
            <person name="Holt K."/>
            <person name="Panagiotidis G."/>
            <person name="Lovell J."/>
            <person name="Beasley H."/>
            <person name="Henderson C."/>
            <person name="Gordon D."/>
            <person name="Auger K."/>
            <person name="Wright D."/>
            <person name="Collins J."/>
            <person name="Raisen C."/>
            <person name="Dyer L."/>
            <person name="Leung K."/>
            <person name="Robertson L."/>
            <person name="Ambridge K."/>
            <person name="Leongamornlert D."/>
            <person name="McGuire S."/>
            <person name="Gilderthorp R."/>
            <person name="Griffiths C."/>
            <person name="Manthravadi D."/>
            <person name="Nichol S."/>
            <person name="Barker G."/>
            <person name="Whitehead S."/>
            <person name="Kay M."/>
            <person name="Brown J."/>
            <person name="Murnane C."/>
            <person name="Gray E."/>
            <person name="Humphries M."/>
            <person name="Sycamore N."/>
            <person name="Barker D."/>
            <person name="Saunders D."/>
            <person name="Wallis J."/>
            <person name="Babbage A."/>
            <person name="Hammond S."/>
            <person name="Mashreghi-Mohammadi M."/>
            <person name="Barr L."/>
            <person name="Martin S."/>
            <person name="Wray P."/>
            <person name="Ellington A."/>
            <person name="Matthews N."/>
            <person name="Ellwood M."/>
            <person name="Woodmansey R."/>
            <person name="Clark G."/>
            <person name="Cooper J."/>
            <person name="Tromans A."/>
            <person name="Grafham D."/>
            <person name="Skuce C."/>
            <person name="Pandian R."/>
            <person name="Andrews R."/>
            <person name="Harrison E."/>
            <person name="Kimberley A."/>
            <person name="Garnett J."/>
            <person name="Fosker N."/>
            <person name="Hall R."/>
            <person name="Garner P."/>
            <person name="Kelly D."/>
            <person name="Bird C."/>
            <person name="Palmer S."/>
            <person name="Gehring I."/>
            <person name="Berger A."/>
            <person name="Dooley C.M."/>
            <person name="Ersan-Urun Z."/>
            <person name="Eser C."/>
            <person name="Geiger H."/>
            <person name="Geisler M."/>
            <person name="Karotki L."/>
            <person name="Kirn A."/>
            <person name="Konantz J."/>
            <person name="Konantz M."/>
            <person name="Oberlander M."/>
            <person name="Rudolph-Geiger S."/>
            <person name="Teucke M."/>
            <person name="Lanz C."/>
            <person name="Raddatz G."/>
            <person name="Osoegawa K."/>
            <person name="Zhu B."/>
            <person name="Rapp A."/>
            <person name="Widaa S."/>
            <person name="Langford C."/>
            <person name="Yang F."/>
            <person name="Schuster S.C."/>
            <person name="Carter N.P."/>
            <person name="Harrow J."/>
            <person name="Ning Z."/>
            <person name="Herrero J."/>
            <person name="Searle S.M."/>
            <person name="Enright A."/>
            <person name="Geisler R."/>
            <person name="Plasterk R.H."/>
            <person name="Lee C."/>
            <person name="Westerfield M."/>
            <person name="de Jong P.J."/>
            <person name="Zon L.I."/>
            <person name="Postlethwait J.H."/>
            <person name="Nusslein-Volhard C."/>
            <person name="Hubbard T.J."/>
            <person name="Roest Crollius H."/>
            <person name="Rogers J."/>
            <person name="Stemple D.L."/>
        </authorList>
    </citation>
    <scope>NUCLEOTIDE SEQUENCE [LARGE SCALE GENOMIC DNA]</scope>
    <source>
        <strain>Tuebingen</strain>
    </source>
</reference>
<reference key="2">
    <citation type="submission" date="2007-03" db="EMBL/GenBank/DDBJ databases">
        <authorList>
            <consortium name="NIH - Zebrafish Gene Collection (ZGC) project"/>
        </authorList>
    </citation>
    <scope>NUCLEOTIDE SEQUENCE [LARGE SCALE MRNA]</scope>
</reference>
<proteinExistence type="evidence at transcript level"/>
<keyword id="KW-0106">Calcium</keyword>
<keyword id="KW-0109">Calcium transport</keyword>
<keyword id="KW-1015">Disulfide bond</keyword>
<keyword id="KW-0406">Ion transport</keyword>
<keyword id="KW-0472">Membrane</keyword>
<keyword id="KW-0479">Metal-binding</keyword>
<keyword id="KW-0496">Mitochondrion</keyword>
<keyword id="KW-0999">Mitochondrion inner membrane</keyword>
<keyword id="KW-1185">Reference proteome</keyword>
<keyword id="KW-0677">Repeat</keyword>
<keyword id="KW-0809">Transit peptide</keyword>
<keyword id="KW-0813">Transport</keyword>
<protein>
    <recommendedName>
        <fullName>Calcium uptake protein 1, mitochondrial</fullName>
    </recommendedName>
    <alternativeName>
        <fullName>Calcium-binding atopy-related autoantigen 1 homolog</fullName>
    </alternativeName>
</protein>
<organism>
    <name type="scientific">Danio rerio</name>
    <name type="common">Zebrafish</name>
    <name type="synonym">Brachydanio rerio</name>
    <dbReference type="NCBI Taxonomy" id="7955"/>
    <lineage>
        <taxon>Eukaryota</taxon>
        <taxon>Metazoa</taxon>
        <taxon>Chordata</taxon>
        <taxon>Craniata</taxon>
        <taxon>Vertebrata</taxon>
        <taxon>Euteleostomi</taxon>
        <taxon>Actinopterygii</taxon>
        <taxon>Neopterygii</taxon>
        <taxon>Teleostei</taxon>
        <taxon>Ostariophysi</taxon>
        <taxon>Cypriniformes</taxon>
        <taxon>Danionidae</taxon>
        <taxon>Danioninae</taxon>
        <taxon>Danio</taxon>
    </lineage>
</organism>
<comment type="function">
    <text evidence="1">Calcium sensor of the mitochondrial calcium uniporter (mcu) channel, which senses calcium level via its EF-hand domains. micu1 and micu2 form a disulfide-linked heterodimer that stimulates and inhibits MCU activity, depending on the concentration of calcium. At low calcium levels, micu1 occludes the pore of the MCU channel, preventing mitochondrial calcium uptake. At higher calcium levels, calcium-binding to micu1 and micu2 induces a conformational change that weakens mcu-micu1 interactions and moves the micu1-micu2 heterodimer away from the pore, allowing calcium permeation through the mcu channel. Also required to protect against manganese toxicity by preventing manganese uptake by mcu.</text>
</comment>
<comment type="subunit">
    <text evidence="1">Heterodimer; disulfide-linked; heterodimerizes with micu2. Component of the uniplex complex.</text>
</comment>
<comment type="subcellular location">
    <subcellularLocation>
        <location evidence="1">Mitochondrion intermembrane space</location>
    </subcellularLocation>
    <subcellularLocation>
        <location evidence="1">Mitochondrion inner membrane</location>
    </subcellularLocation>
    <text evidence="1">Recruited to the mitochondrial inner membrane by EMRE/SMDT1. Also localizes to mitochondrial cristae junctions.</text>
</comment>
<comment type="domain">
    <text evidence="1">The EF-hand domains have high affinity for calcium and act as sensors of calcium levels.</text>
</comment>
<comment type="domain">
    <text evidence="1">Lysine and arginine residues in the K/R-ring mediate electrostatic interactions with mcu and play a key role in mcu inhibition in absence of calcium.</text>
</comment>
<comment type="domain">
    <text evidence="1">The C-helix plays a key role in mitochondrial calcium uptake, probably by mediating interaction with micu2.</text>
</comment>
<comment type="similarity">
    <text evidence="5">Belongs to the MICU1 family. MICU1 subfamily.</text>
</comment>
<comment type="sequence caution" evidence="5">
    <conflict type="erroneous gene model prediction">
        <sequence resource="EMBL-CDS" id="CAX13264"/>
    </conflict>
</comment>
<dbReference type="EMBL" id="CT025754">
    <property type="protein sequence ID" value="CAX13263.1"/>
    <property type="molecule type" value="Genomic_DNA"/>
</dbReference>
<dbReference type="EMBL" id="CR854925">
    <property type="protein sequence ID" value="CAX13263.1"/>
    <property type="status" value="JOINED"/>
    <property type="molecule type" value="Genomic_DNA"/>
</dbReference>
<dbReference type="EMBL" id="CR854925">
    <property type="protein sequence ID" value="CAX13564.1"/>
    <property type="molecule type" value="Genomic_DNA"/>
</dbReference>
<dbReference type="EMBL" id="CT025754">
    <property type="protein sequence ID" value="CAX13564.1"/>
    <property type="status" value="JOINED"/>
    <property type="molecule type" value="Genomic_DNA"/>
</dbReference>
<dbReference type="EMBL" id="CT025754">
    <property type="protein sequence ID" value="CAX13264.1"/>
    <property type="status" value="ALT_SEQ"/>
    <property type="molecule type" value="Genomic_DNA"/>
</dbReference>
<dbReference type="EMBL" id="BC134905">
    <property type="protein sequence ID" value="AAI34906.1"/>
    <property type="molecule type" value="mRNA"/>
</dbReference>
<dbReference type="RefSeq" id="NP_001077302.1">
    <property type="nucleotide sequence ID" value="NM_001083833.1"/>
</dbReference>
<dbReference type="SMR" id="A4IG32"/>
<dbReference type="FunCoup" id="A4IG32">
    <property type="interactions" value="835"/>
</dbReference>
<dbReference type="STRING" id="7955.ENSDARP00000149857"/>
<dbReference type="PaxDb" id="7955-ENSDARP00000121050"/>
<dbReference type="PeptideAtlas" id="A4IG32"/>
<dbReference type="Ensembl" id="ENSDART00000132301">
    <property type="protein sequence ID" value="ENSDARP00000121050"/>
    <property type="gene ID" value="ENSDARG00000063358"/>
</dbReference>
<dbReference type="GeneID" id="561210"/>
<dbReference type="KEGG" id="dre:561210"/>
<dbReference type="AGR" id="ZFIN:ZDB-GENE-070410-22"/>
<dbReference type="CTD" id="10367"/>
<dbReference type="ZFIN" id="ZDB-GENE-070410-22">
    <property type="gene designation" value="micu1"/>
</dbReference>
<dbReference type="eggNOG" id="KOG2643">
    <property type="taxonomic scope" value="Eukaryota"/>
</dbReference>
<dbReference type="HOGENOM" id="CLU_027103_3_1_1"/>
<dbReference type="InParanoid" id="A4IG32"/>
<dbReference type="OMA" id="VRTEVWK"/>
<dbReference type="OrthoDB" id="10056860at2759"/>
<dbReference type="PhylomeDB" id="A4IG32"/>
<dbReference type="TreeFam" id="TF313815"/>
<dbReference type="PRO" id="PR:A4IG32"/>
<dbReference type="Proteomes" id="UP000000437">
    <property type="component" value="Chromosome 13"/>
</dbReference>
<dbReference type="Bgee" id="ENSDARG00000063358">
    <property type="expression patterns" value="Expressed in pharyngeal gill and 22 other cell types or tissues"/>
</dbReference>
<dbReference type="ExpressionAtlas" id="A4IG32">
    <property type="expression patterns" value="baseline and differential"/>
</dbReference>
<dbReference type="GO" id="GO:0005743">
    <property type="term" value="C:mitochondrial inner membrane"/>
    <property type="evidence" value="ECO:0000250"/>
    <property type="project" value="UniProtKB"/>
</dbReference>
<dbReference type="GO" id="GO:0005758">
    <property type="term" value="C:mitochondrial intermembrane space"/>
    <property type="evidence" value="ECO:0000250"/>
    <property type="project" value="UniProtKB"/>
</dbReference>
<dbReference type="GO" id="GO:0031966">
    <property type="term" value="C:mitochondrial membrane"/>
    <property type="evidence" value="ECO:0000250"/>
    <property type="project" value="UniProtKB"/>
</dbReference>
<dbReference type="GO" id="GO:1990246">
    <property type="term" value="C:uniplex complex"/>
    <property type="evidence" value="ECO:0000250"/>
    <property type="project" value="UniProtKB"/>
</dbReference>
<dbReference type="GO" id="GO:0005509">
    <property type="term" value="F:calcium ion binding"/>
    <property type="evidence" value="ECO:0000250"/>
    <property type="project" value="UniProtKB"/>
</dbReference>
<dbReference type="GO" id="GO:0061891">
    <property type="term" value="F:calcium ion sensor activity"/>
    <property type="evidence" value="ECO:0000250"/>
    <property type="project" value="UniProtKB"/>
</dbReference>
<dbReference type="GO" id="GO:0036444">
    <property type="term" value="P:calcium import into the mitochondrion"/>
    <property type="evidence" value="ECO:0000318"/>
    <property type="project" value="GO_Central"/>
</dbReference>
<dbReference type="GO" id="GO:0070509">
    <property type="term" value="P:calcium ion import"/>
    <property type="evidence" value="ECO:0000250"/>
    <property type="project" value="UniProtKB"/>
</dbReference>
<dbReference type="GO" id="GO:0051560">
    <property type="term" value="P:mitochondrial calcium ion homeostasis"/>
    <property type="evidence" value="ECO:0000250"/>
    <property type="project" value="UniProtKB"/>
</dbReference>
<dbReference type="GO" id="GO:0006851">
    <property type="term" value="P:mitochondrial calcium ion transmembrane transport"/>
    <property type="evidence" value="ECO:0000250"/>
    <property type="project" value="UniProtKB"/>
</dbReference>
<dbReference type="GO" id="GO:1903852">
    <property type="term" value="P:positive regulation of cristae formation"/>
    <property type="evidence" value="ECO:0000250"/>
    <property type="project" value="UniProtKB"/>
</dbReference>
<dbReference type="GO" id="GO:0051561">
    <property type="term" value="P:positive regulation of mitochondrial calcium ion concentration"/>
    <property type="evidence" value="ECO:0000250"/>
    <property type="project" value="UniProtKB"/>
</dbReference>
<dbReference type="CDD" id="cd16173">
    <property type="entry name" value="EFh_MICU1"/>
    <property type="match status" value="1"/>
</dbReference>
<dbReference type="FunFam" id="1.10.238.10:FF:000088">
    <property type="entry name" value="Calcium uptake protein 1, mitochondrial"/>
    <property type="match status" value="1"/>
</dbReference>
<dbReference type="FunFam" id="1.10.238.10:FF:000159">
    <property type="entry name" value="Calcium uptake protein 1, mitochondrial"/>
    <property type="match status" value="1"/>
</dbReference>
<dbReference type="Gene3D" id="1.10.238.10">
    <property type="entry name" value="EF-hand"/>
    <property type="match status" value="2"/>
</dbReference>
<dbReference type="InterPro" id="IPR011992">
    <property type="entry name" value="EF-hand-dom_pair"/>
</dbReference>
<dbReference type="InterPro" id="IPR018247">
    <property type="entry name" value="EF_Hand_1_Ca_BS"/>
</dbReference>
<dbReference type="InterPro" id="IPR002048">
    <property type="entry name" value="EF_hand_dom"/>
</dbReference>
<dbReference type="InterPro" id="IPR039800">
    <property type="entry name" value="MICU1/2/3"/>
</dbReference>
<dbReference type="PANTHER" id="PTHR12294:SF1">
    <property type="entry name" value="CALCIUM UPTAKE PROTEIN 1, MITOCHONDRIAL"/>
    <property type="match status" value="1"/>
</dbReference>
<dbReference type="PANTHER" id="PTHR12294">
    <property type="entry name" value="EF HAND DOMAIN FAMILY A1,A2-RELATED"/>
    <property type="match status" value="1"/>
</dbReference>
<dbReference type="Pfam" id="PF13202">
    <property type="entry name" value="EF-hand_5"/>
    <property type="match status" value="1"/>
</dbReference>
<dbReference type="Pfam" id="PF13833">
    <property type="entry name" value="EF-hand_8"/>
    <property type="match status" value="1"/>
</dbReference>
<dbReference type="SMART" id="SM00054">
    <property type="entry name" value="EFh"/>
    <property type="match status" value="2"/>
</dbReference>
<dbReference type="SUPFAM" id="SSF47473">
    <property type="entry name" value="EF-hand"/>
    <property type="match status" value="2"/>
</dbReference>
<dbReference type="PROSITE" id="PS00018">
    <property type="entry name" value="EF_HAND_1"/>
    <property type="match status" value="2"/>
</dbReference>
<dbReference type="PROSITE" id="PS50222">
    <property type="entry name" value="EF_HAND_2"/>
    <property type="match status" value="3"/>
</dbReference>
<gene>
    <name type="primary">micu1</name>
    <name type="synonym">cbara1</name>
    <name type="ORF">si:ch211-199i24.4</name>
    <name type="ORF">zgc:162148</name>
</gene>
<accession>A4IG32</accession>
<accession>B8JIY1</accession>
<accession>B8JJM2</accession>
<name>MICU1_DANRE</name>
<feature type="transit peptide" description="Mitochondrion" evidence="1 2">
    <location>
        <begin position="1"/>
        <end position="34"/>
    </location>
</feature>
<feature type="chain" id="PRO_0000322994" description="Calcium uptake protein 1, mitochondrial">
    <location>
        <begin position="35"/>
        <end position="489"/>
    </location>
</feature>
<feature type="domain" description="EF-hand 1" evidence="3">
    <location>
        <begin position="229"/>
        <end position="264"/>
    </location>
</feature>
<feature type="domain" description="EF-hand 2" evidence="3">
    <location>
        <begin position="371"/>
        <end position="386"/>
    </location>
</feature>
<feature type="domain" description="EF-hand 3" evidence="3">
    <location>
        <begin position="420"/>
        <end position="455"/>
    </location>
</feature>
<feature type="region of interest" description="Disordered" evidence="4">
    <location>
        <begin position="62"/>
        <end position="109"/>
    </location>
</feature>
<feature type="region of interest" description="Polybasic region" evidence="1">
    <location>
        <begin position="106"/>
        <end position="117"/>
    </location>
</feature>
<feature type="region of interest" description="K/R-ring" evidence="1">
    <location>
        <begin position="133"/>
        <end position="136"/>
    </location>
</feature>
<feature type="region of interest" description="K/R-ring" evidence="1">
    <location>
        <begin position="270"/>
        <end position="274"/>
    </location>
</feature>
<feature type="region of interest" description="C-helix region" evidence="1">
    <location>
        <begin position="467"/>
        <end position="477"/>
    </location>
</feature>
<feature type="compositionally biased region" description="Basic and acidic residues" evidence="4">
    <location>
        <begin position="64"/>
        <end position="80"/>
    </location>
</feature>
<feature type="compositionally biased region" description="Acidic residues" evidence="4">
    <location>
        <begin position="81"/>
        <end position="101"/>
    </location>
</feature>
<feature type="binding site" evidence="3">
    <location>
        <position position="242"/>
    </location>
    <ligand>
        <name>Ca(2+)</name>
        <dbReference type="ChEBI" id="CHEBI:29108"/>
        <label>1</label>
    </ligand>
</feature>
<feature type="binding site" evidence="3">
    <location>
        <position position="244"/>
    </location>
    <ligand>
        <name>Ca(2+)</name>
        <dbReference type="ChEBI" id="CHEBI:29108"/>
        <label>1</label>
    </ligand>
</feature>
<feature type="binding site" evidence="3">
    <location>
        <position position="246"/>
    </location>
    <ligand>
        <name>Ca(2+)</name>
        <dbReference type="ChEBI" id="CHEBI:29108"/>
        <label>1</label>
    </ligand>
</feature>
<feature type="binding site" evidence="3">
    <location>
        <position position="248"/>
    </location>
    <ligand>
        <name>Ca(2+)</name>
        <dbReference type="ChEBI" id="CHEBI:29108"/>
        <label>1</label>
    </ligand>
</feature>
<feature type="binding site" evidence="3">
    <location>
        <position position="253"/>
    </location>
    <ligand>
        <name>Ca(2+)</name>
        <dbReference type="ChEBI" id="CHEBI:29108"/>
        <label>1</label>
    </ligand>
</feature>
<feature type="binding site" evidence="3">
    <location>
        <position position="433"/>
    </location>
    <ligand>
        <name>Ca(2+)</name>
        <dbReference type="ChEBI" id="CHEBI:29108"/>
        <label>2</label>
    </ligand>
</feature>
<feature type="binding site" evidence="3">
    <location>
        <position position="435"/>
    </location>
    <ligand>
        <name>Ca(2+)</name>
        <dbReference type="ChEBI" id="CHEBI:29108"/>
        <label>2</label>
    </ligand>
</feature>
<feature type="binding site" evidence="3">
    <location>
        <position position="437"/>
    </location>
    <ligand>
        <name>Ca(2+)</name>
        <dbReference type="ChEBI" id="CHEBI:29108"/>
        <label>2</label>
    </ligand>
</feature>
<feature type="binding site" evidence="3">
    <location>
        <position position="439"/>
    </location>
    <ligand>
        <name>Ca(2+)</name>
        <dbReference type="ChEBI" id="CHEBI:29108"/>
        <label>2</label>
    </ligand>
</feature>
<feature type="binding site" evidence="3">
    <location>
        <position position="444"/>
    </location>
    <ligand>
        <name>Ca(2+)</name>
        <dbReference type="ChEBI" id="CHEBI:29108"/>
        <label>2</label>
    </ligand>
</feature>
<feature type="disulfide bond" description="Interchain (with C-413 in micu2)" evidence="1">
    <location>
        <position position="475"/>
    </location>
</feature>
<sequence length="489" mass="55925">MYRLRALTAATVGMVQLTRRHHTGAFRSYQRRRLMLAALAGVTGISASAGLMWTRAYAEAGSSVKHEEQMREEEPLKDVAEEAESDGALESSSGEDEDEAGSEEKKKKQRIGFRDRKVMEYENRIRAYSTPDKIFRYFATLKIINEHGDAEVYMTPQDFVRSITPNEKQPENLGLDQFMVKRYDGKDFWQKISQDREKFADEDSIFYTLGECGLISFSDYIFLTTVLSTPQRNFEIAFKMFDLNGDGEVDLEEFEQVQSIIRSQTSMGMRHRDRSTTGNTLKTGGCSSALTTYFFGADLKGKLTISSFLEFQRKLQHDVLKLEFERNDPVDGRITEKQFGGMLLAYSGVQSRKLKQMQKNLKRMFKDAQGITFEEVENFFTFLKNVNDVDTALSFYHMAGASIDKATMKQVARTVAKVELSDHVCDVVFALFDCDGNGELSNKEFIAIMKQRLMRGLEKPKDMGFTRLVRAMWKCAQDTAWDFAMPKQQ</sequence>